<feature type="chain" id="PRO_0000080059" description="Adenosine kinase">
    <location>
        <begin position="1"/>
        <end position="343"/>
    </location>
</feature>
<feature type="active site" evidence="1">
    <location>
        <position position="296"/>
    </location>
</feature>
<dbReference type="EC" id="2.7.1.20"/>
<dbReference type="EMBL" id="Y15430">
    <property type="protein sequence ID" value="CAA75628.1"/>
    <property type="molecule type" value="mRNA"/>
</dbReference>
<dbReference type="EMBL" id="DS544963">
    <property type="protein sequence ID" value="EDQ69929.1"/>
    <property type="molecule type" value="Genomic_DNA"/>
</dbReference>
<dbReference type="RefSeq" id="XP_001765201.1">
    <property type="nucleotide sequence ID" value="XM_001765149.1"/>
</dbReference>
<dbReference type="SMR" id="O49923"/>
<dbReference type="FunCoup" id="O49923">
    <property type="interactions" value="3840"/>
</dbReference>
<dbReference type="PaxDb" id="3218-PP1S74_140V6.1"/>
<dbReference type="EnsemblPlants" id="Pp3c3_10800V3.1">
    <property type="protein sequence ID" value="Pp3c3_10800V3.1"/>
    <property type="gene ID" value="Pp3c3_10800"/>
</dbReference>
<dbReference type="EnsemblPlants" id="Pp3c3_10800V3.2">
    <property type="protein sequence ID" value="Pp3c3_10800V3.2"/>
    <property type="gene ID" value="Pp3c3_10800"/>
</dbReference>
<dbReference type="Gramene" id="Pp3c3_10800V3.1">
    <property type="protein sequence ID" value="Pp3c3_10800V3.1"/>
    <property type="gene ID" value="Pp3c3_10800"/>
</dbReference>
<dbReference type="Gramene" id="Pp3c3_10800V3.2">
    <property type="protein sequence ID" value="Pp3c3_10800V3.2"/>
    <property type="gene ID" value="Pp3c3_10800"/>
</dbReference>
<dbReference type="eggNOG" id="KOG2854">
    <property type="taxonomic scope" value="Eukaryota"/>
</dbReference>
<dbReference type="HOGENOM" id="CLU_045832_0_0_1"/>
<dbReference type="InParanoid" id="O49923"/>
<dbReference type="OMA" id="YCATECI"/>
<dbReference type="OrthoDB" id="432447at2759"/>
<dbReference type="UniPathway" id="UPA00588">
    <property type="reaction ID" value="UER00659"/>
</dbReference>
<dbReference type="Proteomes" id="UP000006727">
    <property type="component" value="Chromosome 3"/>
</dbReference>
<dbReference type="GO" id="GO:0005829">
    <property type="term" value="C:cytosol"/>
    <property type="evidence" value="ECO:0000318"/>
    <property type="project" value="GO_Central"/>
</dbReference>
<dbReference type="GO" id="GO:0005634">
    <property type="term" value="C:nucleus"/>
    <property type="evidence" value="ECO:0000318"/>
    <property type="project" value="GO_Central"/>
</dbReference>
<dbReference type="GO" id="GO:0004001">
    <property type="term" value="F:adenosine kinase activity"/>
    <property type="evidence" value="ECO:0000318"/>
    <property type="project" value="GO_Central"/>
</dbReference>
<dbReference type="GO" id="GO:0005524">
    <property type="term" value="F:ATP binding"/>
    <property type="evidence" value="ECO:0007669"/>
    <property type="project" value="UniProtKB-KW"/>
</dbReference>
<dbReference type="GO" id="GO:0044209">
    <property type="term" value="P:AMP salvage"/>
    <property type="evidence" value="ECO:0007669"/>
    <property type="project" value="UniProtKB-UniPathway"/>
</dbReference>
<dbReference type="GO" id="GO:0006144">
    <property type="term" value="P:purine nucleobase metabolic process"/>
    <property type="evidence" value="ECO:0000318"/>
    <property type="project" value="GO_Central"/>
</dbReference>
<dbReference type="GO" id="GO:0006166">
    <property type="term" value="P:purine ribonucleoside salvage"/>
    <property type="evidence" value="ECO:0007669"/>
    <property type="project" value="UniProtKB-KW"/>
</dbReference>
<dbReference type="CDD" id="cd01168">
    <property type="entry name" value="adenosine_kinase"/>
    <property type="match status" value="1"/>
</dbReference>
<dbReference type="FunFam" id="3.40.1190.20:FF:000006">
    <property type="entry name" value="Adenosine kinase 2"/>
    <property type="match status" value="1"/>
</dbReference>
<dbReference type="FunFam" id="3.30.1110.10:FF:000001">
    <property type="entry name" value="Adenosine kinase a"/>
    <property type="match status" value="1"/>
</dbReference>
<dbReference type="Gene3D" id="3.30.1110.10">
    <property type="match status" value="1"/>
</dbReference>
<dbReference type="Gene3D" id="3.40.1190.20">
    <property type="match status" value="1"/>
</dbReference>
<dbReference type="InterPro" id="IPR001805">
    <property type="entry name" value="Adenokinase"/>
</dbReference>
<dbReference type="InterPro" id="IPR002173">
    <property type="entry name" value="Carboh/pur_kinase_PfkB_CS"/>
</dbReference>
<dbReference type="InterPro" id="IPR011611">
    <property type="entry name" value="PfkB_dom"/>
</dbReference>
<dbReference type="InterPro" id="IPR029056">
    <property type="entry name" value="Ribokinase-like"/>
</dbReference>
<dbReference type="PANTHER" id="PTHR45769">
    <property type="entry name" value="ADENOSINE KINASE"/>
    <property type="match status" value="1"/>
</dbReference>
<dbReference type="PANTHER" id="PTHR45769:SF3">
    <property type="entry name" value="ADENOSINE KINASE"/>
    <property type="match status" value="1"/>
</dbReference>
<dbReference type="Pfam" id="PF00294">
    <property type="entry name" value="PfkB"/>
    <property type="match status" value="1"/>
</dbReference>
<dbReference type="PRINTS" id="PR00989">
    <property type="entry name" value="ADENOKINASE"/>
</dbReference>
<dbReference type="SUPFAM" id="SSF53613">
    <property type="entry name" value="Ribokinase-like"/>
    <property type="match status" value="1"/>
</dbReference>
<dbReference type="PROSITE" id="PS00584">
    <property type="entry name" value="PFKB_KINASES_2"/>
    <property type="match status" value="1"/>
</dbReference>
<gene>
    <name type="primary">ADK</name>
    <name type="ORF">PHYPADRAFT_184505</name>
</gene>
<organism>
    <name type="scientific">Physcomitrium patens</name>
    <name type="common">Spreading-leaved earth moss</name>
    <name type="synonym">Physcomitrella patens</name>
    <dbReference type="NCBI Taxonomy" id="3218"/>
    <lineage>
        <taxon>Eukaryota</taxon>
        <taxon>Viridiplantae</taxon>
        <taxon>Streptophyta</taxon>
        <taxon>Embryophyta</taxon>
        <taxon>Bryophyta</taxon>
        <taxon>Bryophytina</taxon>
        <taxon>Bryopsida</taxon>
        <taxon>Funariidae</taxon>
        <taxon>Funariales</taxon>
        <taxon>Funariaceae</taxon>
        <taxon>Physcomitrium</taxon>
    </lineage>
</organism>
<proteinExistence type="evidence at transcript level"/>
<protein>
    <recommendedName>
        <fullName>Adenosine kinase</fullName>
        <shortName>AK</shortName>
        <ecNumber>2.7.1.20</ecNumber>
    </recommendedName>
    <alternativeName>
        <fullName>Adenosine 5'-phosphotransferase</fullName>
    </alternativeName>
</protein>
<accession>O49923</accession>
<accession>A9SFV8</accession>
<evidence type="ECO:0000250" key="1"/>
<evidence type="ECO:0000269" key="2">
    <source>
    </source>
</evidence>
<evidence type="ECO:0000305" key="3"/>
<reference key="1">
    <citation type="journal article" date="1998" name="Plant J.">
        <title>Cloning and characterization of an adenosine kinase from Physcomitrella involved in cytokinin metabolism.</title>
        <authorList>
            <person name="von Schwartzenberg K."/>
            <person name="Kruse S."/>
            <person name="Reski R."/>
            <person name="Moffatt B."/>
            <person name="Laloue M."/>
        </authorList>
    </citation>
    <scope>NUCLEOTIDE SEQUENCE [MRNA]</scope>
    <scope>FUNCTION</scope>
    <source>
        <strain>Cambridge</strain>
    </source>
</reference>
<reference key="2">
    <citation type="journal article" date="2008" name="Science">
        <title>The Physcomitrella genome reveals evolutionary insights into the conquest of land by plants.</title>
        <authorList>
            <person name="Rensing S.A."/>
            <person name="Lang D."/>
            <person name="Zimmer A.D."/>
            <person name="Terry A."/>
            <person name="Salamov A."/>
            <person name="Shapiro H."/>
            <person name="Nishiyama T."/>
            <person name="Perroud P.-F."/>
            <person name="Lindquist E.A."/>
            <person name="Kamisugi Y."/>
            <person name="Tanahashi T."/>
            <person name="Sakakibara K."/>
            <person name="Fujita T."/>
            <person name="Oishi K."/>
            <person name="Shin-I T."/>
            <person name="Kuroki Y."/>
            <person name="Toyoda A."/>
            <person name="Suzuki Y."/>
            <person name="Hashimoto S.-I."/>
            <person name="Yamaguchi K."/>
            <person name="Sugano S."/>
            <person name="Kohara Y."/>
            <person name="Fujiyama A."/>
            <person name="Anterola A."/>
            <person name="Aoki S."/>
            <person name="Ashton N."/>
            <person name="Barbazuk W.B."/>
            <person name="Barker E."/>
            <person name="Bennetzen J.L."/>
            <person name="Blankenship R."/>
            <person name="Cho S.H."/>
            <person name="Dutcher S.K."/>
            <person name="Estelle M."/>
            <person name="Fawcett J.A."/>
            <person name="Gundlach H."/>
            <person name="Hanada K."/>
            <person name="Heyl A."/>
            <person name="Hicks K.A."/>
            <person name="Hughes J."/>
            <person name="Lohr M."/>
            <person name="Mayer K."/>
            <person name="Melkozernov A."/>
            <person name="Murata T."/>
            <person name="Nelson D.R."/>
            <person name="Pils B."/>
            <person name="Prigge M."/>
            <person name="Reiss B."/>
            <person name="Renner T."/>
            <person name="Rombauts S."/>
            <person name="Rushton P.J."/>
            <person name="Sanderfoot A."/>
            <person name="Schween G."/>
            <person name="Shiu S.-H."/>
            <person name="Stueber K."/>
            <person name="Theodoulou F.L."/>
            <person name="Tu H."/>
            <person name="Van de Peer Y."/>
            <person name="Verrier P.J."/>
            <person name="Waters E."/>
            <person name="Wood A."/>
            <person name="Yang L."/>
            <person name="Cove D."/>
            <person name="Cuming A.C."/>
            <person name="Hasebe M."/>
            <person name="Lucas S."/>
            <person name="Mishler B.D."/>
            <person name="Reski R."/>
            <person name="Grigoriev I.V."/>
            <person name="Quatrano R.S."/>
            <person name="Boore J.L."/>
        </authorList>
    </citation>
    <scope>NUCLEOTIDE SEQUENCE [LARGE SCALE GENOMIC DNA]</scope>
    <source>
        <strain>cv. Gransden 2004</strain>
    </source>
</reference>
<comment type="function">
    <text evidence="2">ATP dependent phosphorylation of adenosine and other related nucleoside analogs to monophosphate derivatives. Can also act on the cytokinin isopentenyladenosine to produce isopentenyladenosine monophosphate.</text>
</comment>
<comment type="catalytic activity">
    <reaction>
        <text>adenosine + ATP = AMP + ADP + H(+)</text>
        <dbReference type="Rhea" id="RHEA:20824"/>
        <dbReference type="ChEBI" id="CHEBI:15378"/>
        <dbReference type="ChEBI" id="CHEBI:16335"/>
        <dbReference type="ChEBI" id="CHEBI:30616"/>
        <dbReference type="ChEBI" id="CHEBI:456215"/>
        <dbReference type="ChEBI" id="CHEBI:456216"/>
        <dbReference type="EC" id="2.7.1.20"/>
    </reaction>
</comment>
<comment type="cofactor">
    <cofactor evidence="1">
        <name>Mg(2+)</name>
        <dbReference type="ChEBI" id="CHEBI:18420"/>
    </cofactor>
</comment>
<comment type="pathway">
    <text>Purine metabolism; AMP biosynthesis via salvage pathway; AMP from adenosine: step 1/1.</text>
</comment>
<comment type="similarity">
    <text evidence="3">Belongs to the carbohydrate kinase PfkB family.</text>
</comment>
<name>ADK_PHYPA</name>
<keyword id="KW-0067">ATP-binding</keyword>
<keyword id="KW-0418">Kinase</keyword>
<keyword id="KW-0460">Magnesium</keyword>
<keyword id="KW-0547">Nucleotide-binding</keyword>
<keyword id="KW-0660">Purine salvage</keyword>
<keyword id="KW-1185">Reference proteome</keyword>
<keyword id="KW-0808">Transferase</keyword>
<sequence length="343" mass="37251">MASEGVLLGMGNPLLDISCVVDDAFLEKYGLTLNNAILAEDKHLPMYKELAANPDVEYIAGGATQNTIRIAQWMLGESNATSYFGCVGKDEYGDRMFKLASEGGVNIRYDVDEDLPTGTCGVLVVKGERSLVANLSAANKYKIDHLKKPENWAFVEKAKYIYSAGFFLTVSPESMMTVAKHAAETGKYYMINLAAPFICQFFKDPLMELFPYVDFIFGNESEARAFAQVQGWETEDTKVIAVKLAALPKAGGTHKRVAVITQGTDPTIVAEDGKVTEFPVTPIPKEKLVDTNAAGDSFVGGFLSQLVLGKDIAQCVRAGNYAASVIIQRSGCTFPSKPSFESQ</sequence>